<sequence>MEVEIRLGSVRYPFRLGTDCLGAIVEDLVAMSASRLLIVCDSNTGPLFGAELVERLSPRVPANLLIHRAGEPYKDLQAVGTLADSALQLGADRASVVVAVGGGVIGNIAGLMAALLFRGIRLVHIPTSLIAMSDSVLSLKQAVNACVGKNLMGTFYAPESVLADTAMLRSLPFRETVSGLCEVVKNSLAIRPSMVEMLRTSLRQDAVYDDETMYEIISESILAKASVTVDDMHECRAGLVLEYGHTVGHAIEYTAAGGLSHGQAIGLGMVVAAEVSHRLGHLDQEAVALHRELLTRAGAMVTIPEEVDLDEVMHRLRFDNKRGYLADPAESSAMVLLGGLGEPLWHDGRPLVSVPMALVGEVVNEIARPEIPNFELVAPVETVEEGRVPDTVGAADG</sequence>
<keyword id="KW-0045">Antibiotic biosynthesis</keyword>
<keyword id="KW-0170">Cobalt</keyword>
<keyword id="KW-0456">Lyase</keyword>
<keyword id="KW-0479">Metal-binding</keyword>
<keyword id="KW-0520">NAD</keyword>
<name>DOIS_MICEC</name>
<evidence type="ECO:0000250" key="1">
    <source>
        <dbReference type="UniProtKB" id="Q9S5E2"/>
    </source>
</evidence>
<evidence type="ECO:0000269" key="2">
    <source>
    </source>
</evidence>
<evidence type="ECO:0000305" key="3"/>
<accession>Q70KD0</accession>
<reference key="1">
    <citation type="journal article" date="2004" name="J. Antibiot.">
        <title>Gene cluster in Micromonospora echinospora ATCC15835 for the biosynthesis of the gentamicin C complex.</title>
        <authorList>
            <person name="Unwin J."/>
            <person name="Standage S."/>
            <person name="Alexander D."/>
            <person name="Hosted T. Jr."/>
            <person name="Horan A.C."/>
            <person name="Wellington E.M."/>
        </authorList>
    </citation>
    <scope>NUCLEOTIDE SEQUENCE [GENOMIC DNA]</scope>
    <source>
        <strain>ATCC 15835 / DSM 43036 / BCRC 11561 / JCM 3074 / NBRC 12575 / NCIMB 12882 / NRRL 2953</strain>
    </source>
</reference>
<reference key="2">
    <citation type="journal article" date="2004" name="Mol. Cells">
        <title>Molecular cloning and characterization of a 2-deoxystreptamine biosynthetic gene cluster in gentamicin-producing Micromonospora echinospora ATCC15835.</title>
        <authorList>
            <person name="Kharel M.K."/>
            <person name="Basnet D.B."/>
            <person name="Lee H.C."/>
            <person name="Liou K."/>
            <person name="Moon Y.H."/>
            <person name="Kim J.-J."/>
            <person name="Woo J.S."/>
            <person name="Sohng J.K."/>
        </authorList>
    </citation>
    <scope>NUCLEOTIDE SEQUENCE [GENOMIC DNA]</scope>
    <scope>FUNCTION</scope>
    <source>
        <strain>ATCC 15835 / DSM 43036 / BCRC 11561 / JCM 3074 / NBRC 12575 / NCIMB 12882 / NRRL 2953</strain>
    </source>
</reference>
<reference key="3">
    <citation type="submission" date="2004-02" db="EMBL/GenBank/DDBJ databases">
        <title>Cloning and sequencing of the gentamicin biosynthetic gene cluster from Micromonospora echinospora DSM 43036.</title>
        <authorList>
            <person name="Aboshanab K.M.A."/>
            <person name="Schmidt-Beissner H."/>
            <person name="Wehmeier U.F."/>
            <person name="Welzel K."/>
            <person name="Vente A."/>
            <person name="Piepersberg W."/>
        </authorList>
    </citation>
    <scope>NUCLEOTIDE SEQUENCE [GENOMIC DNA]</scope>
    <source>
        <strain>ATCC 15835 / DSM 43036 / BCRC 11561 / JCM 3074 / NBRC 12575 / NCIMB 12882 / NRRL 2953</strain>
    </source>
</reference>
<comment type="function">
    <text evidence="2">Catalyzes the intramolecular carbocycle formation from D-glucose-6-phosphate to 2-deoxy-scyllo-inosose (DOI).</text>
</comment>
<comment type="catalytic activity">
    <reaction>
        <text>D-glucose 6-phosphate = 2-deoxy-L-scyllo-inosose + phosphate</text>
        <dbReference type="Rhea" id="RHEA:33071"/>
        <dbReference type="ChEBI" id="CHEBI:43474"/>
        <dbReference type="ChEBI" id="CHEBI:61548"/>
        <dbReference type="ChEBI" id="CHEBI:64796"/>
        <dbReference type="EC" id="4.2.3.124"/>
    </reaction>
</comment>
<comment type="cofactor">
    <cofactor evidence="1">
        <name>NAD(+)</name>
        <dbReference type="ChEBI" id="CHEBI:57540"/>
    </cofactor>
</comment>
<comment type="cofactor">
    <cofactor evidence="1">
        <name>Co(2+)</name>
        <dbReference type="ChEBI" id="CHEBI:48828"/>
    </cofactor>
    <text evidence="1">Binds 1 Co(2+) ion per subunit.</text>
</comment>
<comment type="biophysicochemical properties">
    <temperatureDependence>
        <text>Optimum temperature is 42 degrees Celsius.</text>
    </temperatureDependence>
</comment>
<comment type="pathway">
    <text>Metabolic intermediate biosynthesis; 2-deoxystreptamine biosynthesis; 2-deoxystreptamine from D-glucose 6-phosphate: step 1/4.</text>
</comment>
<comment type="pathway">
    <text>Antibiotic biosynthesis; gentamicin biosynthesis.</text>
</comment>
<comment type="similarity">
    <text evidence="3">Belongs to the sugar phosphate cyclases superfamily. DOI synthase family.</text>
</comment>
<organism>
    <name type="scientific">Micromonospora echinospora</name>
    <name type="common">Micromonospora purpurea</name>
    <dbReference type="NCBI Taxonomy" id="1877"/>
    <lineage>
        <taxon>Bacteria</taxon>
        <taxon>Bacillati</taxon>
        <taxon>Actinomycetota</taxon>
        <taxon>Actinomycetes</taxon>
        <taxon>Micromonosporales</taxon>
        <taxon>Micromonosporaceae</taxon>
        <taxon>Micromonospora</taxon>
    </lineage>
</organism>
<protein>
    <recommendedName>
        <fullName>2-deoxy-scyllo-inosose synthase</fullName>
        <shortName>DOI synthase</shortName>
        <shortName>DOIS</shortName>
        <ecNumber>4.2.3.124</ecNumber>
    </recommendedName>
</protein>
<gene>
    <name type="primary">gtmA</name>
    <name type="synonym">genC</name>
    <name type="synonym">gntB</name>
</gene>
<feature type="chain" id="PRO_0000234035" description="2-deoxy-scyllo-inosose synthase">
    <location>
        <begin position="1"/>
        <end position="397"/>
    </location>
</feature>
<feature type="active site" evidence="1">
    <location>
        <position position="140"/>
    </location>
</feature>
<feature type="active site" evidence="1">
    <location>
        <position position="242"/>
    </location>
</feature>
<feature type="binding site" evidence="1">
    <location>
        <position position="41"/>
    </location>
    <ligand>
        <name>NAD(+)</name>
        <dbReference type="ChEBI" id="CHEBI:57540"/>
    </ligand>
</feature>
<feature type="binding site" evidence="1">
    <location>
        <begin position="71"/>
        <end position="74"/>
    </location>
    <ligand>
        <name>NAD(+)</name>
        <dbReference type="ChEBI" id="CHEBI:57540"/>
    </ligand>
</feature>
<feature type="binding site" evidence="1">
    <location>
        <begin position="103"/>
        <end position="107"/>
    </location>
    <ligand>
        <name>NAD(+)</name>
        <dbReference type="ChEBI" id="CHEBI:57540"/>
    </ligand>
</feature>
<feature type="binding site" evidence="1">
    <location>
        <begin position="127"/>
        <end position="128"/>
    </location>
    <ligand>
        <name>NAD(+)</name>
        <dbReference type="ChEBI" id="CHEBI:57540"/>
    </ligand>
</feature>
<feature type="binding site" evidence="1">
    <location>
        <begin position="138"/>
        <end position="140"/>
    </location>
    <ligand>
        <name>NAD(+)</name>
        <dbReference type="ChEBI" id="CHEBI:57540"/>
    </ligand>
</feature>
<feature type="binding site" evidence="1">
    <location>
        <begin position="149"/>
        <end position="150"/>
    </location>
    <ligand>
        <name>NAD(+)</name>
        <dbReference type="ChEBI" id="CHEBI:57540"/>
    </ligand>
</feature>
<feature type="binding site" evidence="1">
    <location>
        <position position="182"/>
    </location>
    <ligand>
        <name>Co(2+)</name>
        <dbReference type="ChEBI" id="CHEBI:48828"/>
    </ligand>
</feature>
<feature type="binding site" evidence="1">
    <location>
        <position position="245"/>
    </location>
    <ligand>
        <name>Co(2+)</name>
        <dbReference type="ChEBI" id="CHEBI:48828"/>
    </ligand>
</feature>
<feature type="binding site" evidence="1">
    <location>
        <position position="261"/>
    </location>
    <ligand>
        <name>Co(2+)</name>
        <dbReference type="ChEBI" id="CHEBI:48828"/>
    </ligand>
</feature>
<dbReference type="EC" id="4.2.3.124"/>
<dbReference type="EMBL" id="AY524043">
    <property type="protein sequence ID" value="AAR98548.1"/>
    <property type="molecule type" value="Genomic_DNA"/>
</dbReference>
<dbReference type="EMBL" id="AJ575934">
    <property type="protein sequence ID" value="CAE06511.1"/>
    <property type="molecule type" value="Genomic_DNA"/>
</dbReference>
<dbReference type="EMBL" id="AJ628149">
    <property type="protein sequence ID" value="CAF31431.1"/>
    <property type="molecule type" value="Genomic_DNA"/>
</dbReference>
<dbReference type="RefSeq" id="WP_088981635.1">
    <property type="nucleotide sequence ID" value="NZ_LT607413.1"/>
</dbReference>
<dbReference type="SMR" id="Q70KD0"/>
<dbReference type="OrthoDB" id="9806583at2"/>
<dbReference type="UniPathway" id="UPA00907">
    <property type="reaction ID" value="UER00921"/>
</dbReference>
<dbReference type="UniPathway" id="UPA00967"/>
<dbReference type="GO" id="GO:0003856">
    <property type="term" value="F:3-dehydroquinate synthase activity"/>
    <property type="evidence" value="ECO:0007669"/>
    <property type="project" value="TreeGrafter"/>
</dbReference>
<dbReference type="GO" id="GO:0046872">
    <property type="term" value="F:metal ion binding"/>
    <property type="evidence" value="ECO:0007669"/>
    <property type="project" value="UniProtKB-KW"/>
</dbReference>
<dbReference type="GO" id="GO:0017000">
    <property type="term" value="P:antibiotic biosynthetic process"/>
    <property type="evidence" value="ECO:0007669"/>
    <property type="project" value="UniProtKB-KW"/>
</dbReference>
<dbReference type="GO" id="GO:0009073">
    <property type="term" value="P:aromatic amino acid family biosynthetic process"/>
    <property type="evidence" value="ECO:0007669"/>
    <property type="project" value="InterPro"/>
</dbReference>
<dbReference type="CDD" id="cd08197">
    <property type="entry name" value="DOIS"/>
    <property type="match status" value="1"/>
</dbReference>
<dbReference type="Gene3D" id="3.40.50.1970">
    <property type="match status" value="1"/>
</dbReference>
<dbReference type="Gene3D" id="1.20.1090.10">
    <property type="entry name" value="Dehydroquinate synthase-like - alpha domain"/>
    <property type="match status" value="1"/>
</dbReference>
<dbReference type="InterPro" id="IPR050071">
    <property type="entry name" value="Dehydroquinate_synthase"/>
</dbReference>
<dbReference type="InterPro" id="IPR030963">
    <property type="entry name" value="DHQ_synth_fam"/>
</dbReference>
<dbReference type="InterPro" id="IPR030960">
    <property type="entry name" value="DHQS/DOIS_N"/>
</dbReference>
<dbReference type="InterPro" id="IPR056179">
    <property type="entry name" value="DHQS_C"/>
</dbReference>
<dbReference type="PANTHER" id="PTHR43622">
    <property type="entry name" value="3-DEHYDROQUINATE SYNTHASE"/>
    <property type="match status" value="1"/>
</dbReference>
<dbReference type="PANTHER" id="PTHR43622:SF1">
    <property type="entry name" value="3-DEHYDROQUINATE SYNTHASE"/>
    <property type="match status" value="1"/>
</dbReference>
<dbReference type="Pfam" id="PF01761">
    <property type="entry name" value="DHQ_synthase"/>
    <property type="match status" value="1"/>
</dbReference>
<dbReference type="Pfam" id="PF24621">
    <property type="entry name" value="DHQS_C"/>
    <property type="match status" value="1"/>
</dbReference>
<dbReference type="PIRSF" id="PIRSF001455">
    <property type="entry name" value="DHQ_synth"/>
    <property type="match status" value="1"/>
</dbReference>
<dbReference type="SUPFAM" id="SSF56796">
    <property type="entry name" value="Dehydroquinate synthase-like"/>
    <property type="match status" value="1"/>
</dbReference>
<proteinExistence type="evidence at protein level"/>